<name>YQED_BACSU</name>
<feature type="chain" id="PRO_0000049783" description="Uncharacterized protein YqeD">
    <location>
        <begin position="1"/>
        <end position="208"/>
    </location>
</feature>
<feature type="transmembrane region" description="Helical" evidence="1">
    <location>
        <begin position="5"/>
        <end position="25"/>
    </location>
</feature>
<feature type="transmembrane region" description="Helical" evidence="1">
    <location>
        <begin position="41"/>
        <end position="61"/>
    </location>
</feature>
<feature type="transmembrane region" description="Helical" evidence="1">
    <location>
        <begin position="69"/>
        <end position="89"/>
    </location>
</feature>
<feature type="transmembrane region" description="Helical" evidence="1">
    <location>
        <begin position="123"/>
        <end position="143"/>
    </location>
</feature>
<feature type="transmembrane region" description="Helical" evidence="1">
    <location>
        <begin position="150"/>
        <end position="170"/>
    </location>
</feature>
<feature type="transmembrane region" description="Helical" evidence="1">
    <location>
        <begin position="176"/>
        <end position="196"/>
    </location>
</feature>
<protein>
    <recommendedName>
        <fullName>Uncharacterized protein YqeD</fullName>
    </recommendedName>
</protein>
<dbReference type="EMBL" id="D84432">
    <property type="protein sequence ID" value="BAA12440.1"/>
    <property type="molecule type" value="Genomic_DNA"/>
</dbReference>
<dbReference type="EMBL" id="AL009126">
    <property type="protein sequence ID" value="CAB14513.1"/>
    <property type="molecule type" value="Genomic_DNA"/>
</dbReference>
<dbReference type="PIR" id="H69950">
    <property type="entry name" value="H69950"/>
</dbReference>
<dbReference type="RefSeq" id="NP_390449.1">
    <property type="nucleotide sequence ID" value="NC_000964.3"/>
</dbReference>
<dbReference type="RefSeq" id="WP_003229962.1">
    <property type="nucleotide sequence ID" value="NZ_OZ025638.1"/>
</dbReference>
<dbReference type="FunCoup" id="P54449">
    <property type="interactions" value="72"/>
</dbReference>
<dbReference type="STRING" id="224308.BSU25720"/>
<dbReference type="PaxDb" id="224308-BSU25720"/>
<dbReference type="DNASU" id="937812"/>
<dbReference type="EnsemblBacteria" id="CAB14513">
    <property type="protein sequence ID" value="CAB14513"/>
    <property type="gene ID" value="BSU_25720"/>
</dbReference>
<dbReference type="GeneID" id="937812"/>
<dbReference type="KEGG" id="bsu:BSU25720"/>
<dbReference type="PATRIC" id="fig|224308.179.peg.2797"/>
<dbReference type="eggNOG" id="COG0398">
    <property type="taxonomic scope" value="Bacteria"/>
</dbReference>
<dbReference type="InParanoid" id="P54449"/>
<dbReference type="OrthoDB" id="2381682at2"/>
<dbReference type="PhylomeDB" id="P54449"/>
<dbReference type="BioCyc" id="BSUB:BSU25720-MONOMER"/>
<dbReference type="Proteomes" id="UP000001570">
    <property type="component" value="Chromosome"/>
</dbReference>
<dbReference type="GO" id="GO:0005886">
    <property type="term" value="C:plasma membrane"/>
    <property type="evidence" value="ECO:0000318"/>
    <property type="project" value="GO_Central"/>
</dbReference>
<dbReference type="InterPro" id="IPR015414">
    <property type="entry name" value="TMEM64"/>
</dbReference>
<dbReference type="InterPro" id="IPR032816">
    <property type="entry name" value="VTT_dom"/>
</dbReference>
<dbReference type="PANTHER" id="PTHR12677">
    <property type="entry name" value="GOLGI APPARATUS MEMBRANE PROTEIN TVP38-RELATED"/>
    <property type="match status" value="1"/>
</dbReference>
<dbReference type="PANTHER" id="PTHR12677:SF59">
    <property type="entry name" value="GOLGI APPARATUS MEMBRANE PROTEIN TVP38-RELATED"/>
    <property type="match status" value="1"/>
</dbReference>
<dbReference type="Pfam" id="PF09335">
    <property type="entry name" value="VTT_dom"/>
    <property type="match status" value="1"/>
</dbReference>
<organism>
    <name type="scientific">Bacillus subtilis (strain 168)</name>
    <dbReference type="NCBI Taxonomy" id="224308"/>
    <lineage>
        <taxon>Bacteria</taxon>
        <taxon>Bacillati</taxon>
        <taxon>Bacillota</taxon>
        <taxon>Bacilli</taxon>
        <taxon>Bacillales</taxon>
        <taxon>Bacillaceae</taxon>
        <taxon>Bacillus</taxon>
    </lineage>
</organism>
<reference key="1">
    <citation type="journal article" date="1996" name="Microbiology">
        <title>Systematic sequencing of the 283 kb 210 degrees-232 degrees region of the Bacillus subtilis genome containing the skin element and many sporulation genes.</title>
        <authorList>
            <person name="Mizuno M."/>
            <person name="Masuda S."/>
            <person name="Takemaru K."/>
            <person name="Hosono S."/>
            <person name="Sato T."/>
            <person name="Takeuchi M."/>
            <person name="Kobayashi Y."/>
        </authorList>
    </citation>
    <scope>NUCLEOTIDE SEQUENCE [GENOMIC DNA]</scope>
    <source>
        <strain>168 / JH642</strain>
    </source>
</reference>
<reference key="2">
    <citation type="journal article" date="1997" name="Nature">
        <title>The complete genome sequence of the Gram-positive bacterium Bacillus subtilis.</title>
        <authorList>
            <person name="Kunst F."/>
            <person name="Ogasawara N."/>
            <person name="Moszer I."/>
            <person name="Albertini A.M."/>
            <person name="Alloni G."/>
            <person name="Azevedo V."/>
            <person name="Bertero M.G."/>
            <person name="Bessieres P."/>
            <person name="Bolotin A."/>
            <person name="Borchert S."/>
            <person name="Borriss R."/>
            <person name="Boursier L."/>
            <person name="Brans A."/>
            <person name="Braun M."/>
            <person name="Brignell S.C."/>
            <person name="Bron S."/>
            <person name="Brouillet S."/>
            <person name="Bruschi C.V."/>
            <person name="Caldwell B."/>
            <person name="Capuano V."/>
            <person name="Carter N.M."/>
            <person name="Choi S.-K."/>
            <person name="Codani J.-J."/>
            <person name="Connerton I.F."/>
            <person name="Cummings N.J."/>
            <person name="Daniel R.A."/>
            <person name="Denizot F."/>
            <person name="Devine K.M."/>
            <person name="Duesterhoeft A."/>
            <person name="Ehrlich S.D."/>
            <person name="Emmerson P.T."/>
            <person name="Entian K.-D."/>
            <person name="Errington J."/>
            <person name="Fabret C."/>
            <person name="Ferrari E."/>
            <person name="Foulger D."/>
            <person name="Fritz C."/>
            <person name="Fujita M."/>
            <person name="Fujita Y."/>
            <person name="Fuma S."/>
            <person name="Galizzi A."/>
            <person name="Galleron N."/>
            <person name="Ghim S.-Y."/>
            <person name="Glaser P."/>
            <person name="Goffeau A."/>
            <person name="Golightly E.J."/>
            <person name="Grandi G."/>
            <person name="Guiseppi G."/>
            <person name="Guy B.J."/>
            <person name="Haga K."/>
            <person name="Haiech J."/>
            <person name="Harwood C.R."/>
            <person name="Henaut A."/>
            <person name="Hilbert H."/>
            <person name="Holsappel S."/>
            <person name="Hosono S."/>
            <person name="Hullo M.-F."/>
            <person name="Itaya M."/>
            <person name="Jones L.-M."/>
            <person name="Joris B."/>
            <person name="Karamata D."/>
            <person name="Kasahara Y."/>
            <person name="Klaerr-Blanchard M."/>
            <person name="Klein C."/>
            <person name="Kobayashi Y."/>
            <person name="Koetter P."/>
            <person name="Koningstein G."/>
            <person name="Krogh S."/>
            <person name="Kumano M."/>
            <person name="Kurita K."/>
            <person name="Lapidus A."/>
            <person name="Lardinois S."/>
            <person name="Lauber J."/>
            <person name="Lazarevic V."/>
            <person name="Lee S.-M."/>
            <person name="Levine A."/>
            <person name="Liu H."/>
            <person name="Masuda S."/>
            <person name="Mauel C."/>
            <person name="Medigue C."/>
            <person name="Medina N."/>
            <person name="Mellado R.P."/>
            <person name="Mizuno M."/>
            <person name="Moestl D."/>
            <person name="Nakai S."/>
            <person name="Noback M."/>
            <person name="Noone D."/>
            <person name="O'Reilly M."/>
            <person name="Ogawa K."/>
            <person name="Ogiwara A."/>
            <person name="Oudega B."/>
            <person name="Park S.-H."/>
            <person name="Parro V."/>
            <person name="Pohl T.M."/>
            <person name="Portetelle D."/>
            <person name="Porwollik S."/>
            <person name="Prescott A.M."/>
            <person name="Presecan E."/>
            <person name="Pujic P."/>
            <person name="Purnelle B."/>
            <person name="Rapoport G."/>
            <person name="Rey M."/>
            <person name="Reynolds S."/>
            <person name="Rieger M."/>
            <person name="Rivolta C."/>
            <person name="Rocha E."/>
            <person name="Roche B."/>
            <person name="Rose M."/>
            <person name="Sadaie Y."/>
            <person name="Sato T."/>
            <person name="Scanlan E."/>
            <person name="Schleich S."/>
            <person name="Schroeter R."/>
            <person name="Scoffone F."/>
            <person name="Sekiguchi J."/>
            <person name="Sekowska A."/>
            <person name="Seror S.J."/>
            <person name="Serror P."/>
            <person name="Shin B.-S."/>
            <person name="Soldo B."/>
            <person name="Sorokin A."/>
            <person name="Tacconi E."/>
            <person name="Takagi T."/>
            <person name="Takahashi H."/>
            <person name="Takemaru K."/>
            <person name="Takeuchi M."/>
            <person name="Tamakoshi A."/>
            <person name="Tanaka T."/>
            <person name="Terpstra P."/>
            <person name="Tognoni A."/>
            <person name="Tosato V."/>
            <person name="Uchiyama S."/>
            <person name="Vandenbol M."/>
            <person name="Vannier F."/>
            <person name="Vassarotti A."/>
            <person name="Viari A."/>
            <person name="Wambutt R."/>
            <person name="Wedler E."/>
            <person name="Wedler H."/>
            <person name="Weitzenegger T."/>
            <person name="Winters P."/>
            <person name="Wipat A."/>
            <person name="Yamamoto H."/>
            <person name="Yamane K."/>
            <person name="Yasumoto K."/>
            <person name="Yata K."/>
            <person name="Yoshida K."/>
            <person name="Yoshikawa H.-F."/>
            <person name="Zumstein E."/>
            <person name="Yoshikawa H."/>
            <person name="Danchin A."/>
        </authorList>
    </citation>
    <scope>NUCLEOTIDE SEQUENCE [LARGE SCALE GENOMIC DNA]</scope>
    <source>
        <strain>168</strain>
    </source>
</reference>
<keyword id="KW-1003">Cell membrane</keyword>
<keyword id="KW-0472">Membrane</keyword>
<keyword id="KW-1185">Reference proteome</keyword>
<keyword id="KW-0812">Transmembrane</keyword>
<keyword id="KW-1133">Transmembrane helix</keyword>
<gene>
    <name type="primary">yqeD</name>
    <name type="ordered locus">BSU25720</name>
</gene>
<comment type="subcellular location">
    <subcellularLocation>
        <location evidence="2">Cell membrane</location>
        <topology evidence="2">Multi-pass membrane protein</topology>
    </subcellularLocation>
</comment>
<evidence type="ECO:0000255" key="1"/>
<evidence type="ECO:0000305" key="2"/>
<proteinExistence type="predicted"/>
<sequence length="208" mass="22937">MLKKVIGILVIIAIISVGFFQKEAWLDAIKAGGMFSVLFSMLLIAADVFFPIVPFALIAALNGAVFGTANGIWITLTGSMLGTILLFFLARYSFRDWARKKVQAYPAIQSYEASFNKNAFTAVLLGRLIPVIPSLVMNVICGLSQVRWHVFFFASLIGKIPNIVVVTIAGANFTSNKLLSISIYGTYILIIMLVIYKKFPHLLKVPKK</sequence>
<accession>P54449</accession>